<name>SLYX_SALPA</name>
<feature type="chain" id="PRO_0000227081" description="Protein SlyX">
    <location>
        <begin position="1"/>
        <end position="67"/>
    </location>
</feature>
<feature type="region of interest" description="Disordered" evidence="2">
    <location>
        <begin position="47"/>
        <end position="67"/>
    </location>
</feature>
<feature type="compositionally biased region" description="Polar residues" evidence="2">
    <location>
        <begin position="50"/>
        <end position="60"/>
    </location>
</feature>
<evidence type="ECO:0000255" key="1">
    <source>
        <dbReference type="HAMAP-Rule" id="MF_00715"/>
    </source>
</evidence>
<evidence type="ECO:0000256" key="2">
    <source>
        <dbReference type="SAM" id="MobiDB-lite"/>
    </source>
</evidence>
<dbReference type="EMBL" id="CP000026">
    <property type="protein sequence ID" value="AAV79136.1"/>
    <property type="molecule type" value="Genomic_DNA"/>
</dbReference>
<dbReference type="SMR" id="Q5PL24"/>
<dbReference type="KEGG" id="spt:SPA3320"/>
<dbReference type="HOGENOM" id="CLU_180796_4_2_6"/>
<dbReference type="Proteomes" id="UP000008185">
    <property type="component" value="Chromosome"/>
</dbReference>
<dbReference type="Gene3D" id="1.20.5.300">
    <property type="match status" value="1"/>
</dbReference>
<dbReference type="HAMAP" id="MF_00715">
    <property type="entry name" value="SlyX"/>
    <property type="match status" value="1"/>
</dbReference>
<dbReference type="InterPro" id="IPR007236">
    <property type="entry name" value="SlyX"/>
</dbReference>
<dbReference type="NCBIfam" id="NF002750">
    <property type="entry name" value="PRK02793.1"/>
    <property type="match status" value="1"/>
</dbReference>
<dbReference type="PANTHER" id="PTHR36508">
    <property type="entry name" value="PROTEIN SLYX"/>
    <property type="match status" value="1"/>
</dbReference>
<dbReference type="PANTHER" id="PTHR36508:SF1">
    <property type="entry name" value="PROTEIN SLYX"/>
    <property type="match status" value="1"/>
</dbReference>
<dbReference type="Pfam" id="PF04102">
    <property type="entry name" value="SlyX"/>
    <property type="match status" value="1"/>
</dbReference>
<sequence>MEARLAELESRLAFQEITIEELNLTVTAHEMEMAKLRDHLRLLTEKLKASQPSNIASQAEETPPPHY</sequence>
<comment type="similarity">
    <text evidence="1">Belongs to the SlyX family.</text>
</comment>
<reference key="1">
    <citation type="journal article" date="2004" name="Nat. Genet.">
        <title>Comparison of genome degradation in Paratyphi A and Typhi, human-restricted serovars of Salmonella enterica that cause typhoid.</title>
        <authorList>
            <person name="McClelland M."/>
            <person name="Sanderson K.E."/>
            <person name="Clifton S.W."/>
            <person name="Latreille P."/>
            <person name="Porwollik S."/>
            <person name="Sabo A."/>
            <person name="Meyer R."/>
            <person name="Bieri T."/>
            <person name="Ozersky P."/>
            <person name="McLellan M."/>
            <person name="Harkins C.R."/>
            <person name="Wang C."/>
            <person name="Nguyen C."/>
            <person name="Berghoff A."/>
            <person name="Elliott G."/>
            <person name="Kohlberg S."/>
            <person name="Strong C."/>
            <person name="Du F."/>
            <person name="Carter J."/>
            <person name="Kremizki C."/>
            <person name="Layman D."/>
            <person name="Leonard S."/>
            <person name="Sun H."/>
            <person name="Fulton L."/>
            <person name="Nash W."/>
            <person name="Miner T."/>
            <person name="Minx P."/>
            <person name="Delehaunty K."/>
            <person name="Fronick C."/>
            <person name="Magrini V."/>
            <person name="Nhan M."/>
            <person name="Warren W."/>
            <person name="Florea L."/>
            <person name="Spieth J."/>
            <person name="Wilson R.K."/>
        </authorList>
    </citation>
    <scope>NUCLEOTIDE SEQUENCE [LARGE SCALE GENOMIC DNA]</scope>
    <source>
        <strain>ATCC 9150 / SARB42</strain>
    </source>
</reference>
<protein>
    <recommendedName>
        <fullName evidence="1">Protein SlyX</fullName>
    </recommendedName>
</protein>
<accession>Q5PL24</accession>
<gene>
    <name evidence="1" type="primary">slyX</name>
    <name type="ordered locus">SPA3320</name>
</gene>
<proteinExistence type="inferred from homology"/>
<organism>
    <name type="scientific">Salmonella paratyphi A (strain ATCC 9150 / SARB42)</name>
    <dbReference type="NCBI Taxonomy" id="295319"/>
    <lineage>
        <taxon>Bacteria</taxon>
        <taxon>Pseudomonadati</taxon>
        <taxon>Pseudomonadota</taxon>
        <taxon>Gammaproteobacteria</taxon>
        <taxon>Enterobacterales</taxon>
        <taxon>Enterobacteriaceae</taxon>
        <taxon>Salmonella</taxon>
    </lineage>
</organism>